<protein>
    <recommendedName>
        <fullName evidence="1">Oxygen-dependent choline dehydrogenase</fullName>
        <shortName evidence="1">CDH</shortName>
        <shortName evidence="1">CHD</shortName>
        <ecNumber evidence="1">1.1.99.1</ecNumber>
    </recommendedName>
    <alternativeName>
        <fullName evidence="1">Betaine aldehyde dehydrogenase</fullName>
        <shortName evidence="1">BADH</shortName>
        <ecNumber evidence="1">1.2.1.8</ecNumber>
    </alternativeName>
</protein>
<dbReference type="EC" id="1.1.99.1" evidence="1"/>
<dbReference type="EC" id="1.2.1.8" evidence="1"/>
<dbReference type="EMBL" id="CP000712">
    <property type="protein sequence ID" value="ABQ81057.1"/>
    <property type="molecule type" value="Genomic_DNA"/>
</dbReference>
<dbReference type="SMR" id="A5WA97"/>
<dbReference type="KEGG" id="ppf:Pput_4937"/>
<dbReference type="eggNOG" id="COG2303">
    <property type="taxonomic scope" value="Bacteria"/>
</dbReference>
<dbReference type="HOGENOM" id="CLU_002865_7_1_6"/>
<dbReference type="UniPathway" id="UPA00529">
    <property type="reaction ID" value="UER00385"/>
</dbReference>
<dbReference type="GO" id="GO:0016020">
    <property type="term" value="C:membrane"/>
    <property type="evidence" value="ECO:0007669"/>
    <property type="project" value="TreeGrafter"/>
</dbReference>
<dbReference type="GO" id="GO:0008802">
    <property type="term" value="F:betaine-aldehyde dehydrogenase (NAD+) activity"/>
    <property type="evidence" value="ECO:0007669"/>
    <property type="project" value="UniProtKB-EC"/>
</dbReference>
<dbReference type="GO" id="GO:0008812">
    <property type="term" value="F:choline dehydrogenase activity"/>
    <property type="evidence" value="ECO:0007669"/>
    <property type="project" value="UniProtKB-UniRule"/>
</dbReference>
<dbReference type="GO" id="GO:0050660">
    <property type="term" value="F:flavin adenine dinucleotide binding"/>
    <property type="evidence" value="ECO:0007669"/>
    <property type="project" value="InterPro"/>
</dbReference>
<dbReference type="GO" id="GO:0019285">
    <property type="term" value="P:glycine betaine biosynthetic process from choline"/>
    <property type="evidence" value="ECO:0007669"/>
    <property type="project" value="UniProtKB-UniRule"/>
</dbReference>
<dbReference type="Gene3D" id="3.50.50.60">
    <property type="entry name" value="FAD/NAD(P)-binding domain"/>
    <property type="match status" value="1"/>
</dbReference>
<dbReference type="Gene3D" id="3.30.560.10">
    <property type="entry name" value="Glucose Oxidase, domain 3"/>
    <property type="match status" value="1"/>
</dbReference>
<dbReference type="HAMAP" id="MF_00750">
    <property type="entry name" value="Choline_dehydrogen"/>
    <property type="match status" value="1"/>
</dbReference>
<dbReference type="InterPro" id="IPR011533">
    <property type="entry name" value="BetA"/>
</dbReference>
<dbReference type="InterPro" id="IPR036188">
    <property type="entry name" value="FAD/NAD-bd_sf"/>
</dbReference>
<dbReference type="InterPro" id="IPR012132">
    <property type="entry name" value="GMC_OxRdtase"/>
</dbReference>
<dbReference type="InterPro" id="IPR000172">
    <property type="entry name" value="GMC_OxRdtase_N"/>
</dbReference>
<dbReference type="InterPro" id="IPR007867">
    <property type="entry name" value="GMC_OxRtase_C"/>
</dbReference>
<dbReference type="NCBIfam" id="TIGR01810">
    <property type="entry name" value="betA"/>
    <property type="match status" value="1"/>
</dbReference>
<dbReference type="NCBIfam" id="NF002550">
    <property type="entry name" value="PRK02106.1"/>
    <property type="match status" value="1"/>
</dbReference>
<dbReference type="PANTHER" id="PTHR11552:SF147">
    <property type="entry name" value="CHOLINE DEHYDROGENASE, MITOCHONDRIAL"/>
    <property type="match status" value="1"/>
</dbReference>
<dbReference type="PANTHER" id="PTHR11552">
    <property type="entry name" value="GLUCOSE-METHANOL-CHOLINE GMC OXIDOREDUCTASE"/>
    <property type="match status" value="1"/>
</dbReference>
<dbReference type="Pfam" id="PF05199">
    <property type="entry name" value="GMC_oxred_C"/>
    <property type="match status" value="1"/>
</dbReference>
<dbReference type="Pfam" id="PF00732">
    <property type="entry name" value="GMC_oxred_N"/>
    <property type="match status" value="1"/>
</dbReference>
<dbReference type="PIRSF" id="PIRSF000137">
    <property type="entry name" value="Alcohol_oxidase"/>
    <property type="match status" value="1"/>
</dbReference>
<dbReference type="SUPFAM" id="SSF54373">
    <property type="entry name" value="FAD-linked reductases, C-terminal domain"/>
    <property type="match status" value="1"/>
</dbReference>
<dbReference type="SUPFAM" id="SSF51905">
    <property type="entry name" value="FAD/NAD(P)-binding domain"/>
    <property type="match status" value="1"/>
</dbReference>
<dbReference type="PROSITE" id="PS00623">
    <property type="entry name" value="GMC_OXRED_1"/>
    <property type="match status" value="1"/>
</dbReference>
<dbReference type="PROSITE" id="PS00624">
    <property type="entry name" value="GMC_OXRED_2"/>
    <property type="match status" value="1"/>
</dbReference>
<feature type="chain" id="PRO_1000046570" description="Oxygen-dependent choline dehydrogenase">
    <location>
        <begin position="1"/>
        <end position="565"/>
    </location>
</feature>
<feature type="active site" description="Proton acceptor" evidence="1">
    <location>
        <position position="475"/>
    </location>
</feature>
<feature type="binding site" evidence="1">
    <location>
        <begin position="6"/>
        <end position="35"/>
    </location>
    <ligand>
        <name>FAD</name>
        <dbReference type="ChEBI" id="CHEBI:57692"/>
    </ligand>
</feature>
<organism>
    <name type="scientific">Pseudomonas putida (strain ATCC 700007 / DSM 6899 / JCM 31910 / BCRC 17059 / LMG 24140 / F1)</name>
    <dbReference type="NCBI Taxonomy" id="351746"/>
    <lineage>
        <taxon>Bacteria</taxon>
        <taxon>Pseudomonadati</taxon>
        <taxon>Pseudomonadota</taxon>
        <taxon>Gammaproteobacteria</taxon>
        <taxon>Pseudomonadales</taxon>
        <taxon>Pseudomonadaceae</taxon>
        <taxon>Pseudomonas</taxon>
    </lineage>
</organism>
<gene>
    <name evidence="1" type="primary">betA</name>
    <name type="ordered locus">Pput_4937</name>
</gene>
<comment type="function">
    <text evidence="1">Involved in the biosynthesis of the osmoprotectant glycine betaine. Catalyzes the oxidation of choline to betaine aldehyde and betaine aldehyde to glycine betaine at the same rate.</text>
</comment>
<comment type="catalytic activity">
    <reaction evidence="1">
        <text>choline + A = betaine aldehyde + AH2</text>
        <dbReference type="Rhea" id="RHEA:17433"/>
        <dbReference type="ChEBI" id="CHEBI:13193"/>
        <dbReference type="ChEBI" id="CHEBI:15354"/>
        <dbReference type="ChEBI" id="CHEBI:15710"/>
        <dbReference type="ChEBI" id="CHEBI:17499"/>
        <dbReference type="EC" id="1.1.99.1"/>
    </reaction>
</comment>
<comment type="catalytic activity">
    <reaction evidence="1">
        <text>betaine aldehyde + NAD(+) + H2O = glycine betaine + NADH + 2 H(+)</text>
        <dbReference type="Rhea" id="RHEA:15305"/>
        <dbReference type="ChEBI" id="CHEBI:15377"/>
        <dbReference type="ChEBI" id="CHEBI:15378"/>
        <dbReference type="ChEBI" id="CHEBI:15710"/>
        <dbReference type="ChEBI" id="CHEBI:17750"/>
        <dbReference type="ChEBI" id="CHEBI:57540"/>
        <dbReference type="ChEBI" id="CHEBI:57945"/>
        <dbReference type="EC" id="1.2.1.8"/>
    </reaction>
</comment>
<comment type="cofactor">
    <cofactor evidence="1">
        <name>FAD</name>
        <dbReference type="ChEBI" id="CHEBI:57692"/>
    </cofactor>
</comment>
<comment type="pathway">
    <text evidence="1">Amine and polyamine biosynthesis; betaine biosynthesis via choline pathway; betaine aldehyde from choline (cytochrome c reductase route): step 1/1.</text>
</comment>
<comment type="similarity">
    <text evidence="1">Belongs to the GMC oxidoreductase family.</text>
</comment>
<sequence>MSQEFDYIIVGAGSAGNTLATRLTEDAGVTVLLLEAGGPDYRFDFRTQMPAALAFPLQGRRYNWAYETDPEPYMDGRRMECGRGKGLGGSSLINGMCYIRGNAMDFDGWAELPGLEDWTYLDCLPYFRKAETRDIGPNDYHGGDGPVSVATPKAGNNPLFHAMVEAGVQAGYPRTEDLNGYQQEGFGPMDRSVTKNGRRSSTARGYLDQAKKRPNLTIVTHALTDRVLFDGKRAVGVTYLVGDSEERVEARARKEVIVSSGAIASPQLLQRSGVGPRALLESLDIPVVHDLPGVGENLQDHLELYLQYACTQPVSLYPSLLWWNQPAIGAEWLFNGTGIGASNQFEAGGFIRTRPEFKWPNIQYHFLPVAINYNGSNGVKEHGFQAHMGSMRSPARGRIQAKSKDPRQHPSILFNYMSTEQDWQEFRDGIRLTREIMAQPALDPYRGREISPGAHVQTDEELDKFIREHAETAFHPSCSCKMGTDDMAVVDGEGRVHGMKGLRVVDASIMPLIITGNLNATTIMIAEKISDKIRGRKPLPRSTAKYYVAGDAPVKGKPMREVKQG</sequence>
<keyword id="KW-0274">FAD</keyword>
<keyword id="KW-0285">Flavoprotein</keyword>
<keyword id="KW-0520">NAD</keyword>
<keyword id="KW-0560">Oxidoreductase</keyword>
<name>BETA_PSEP1</name>
<proteinExistence type="inferred from homology"/>
<accession>A5WA97</accession>
<reference key="1">
    <citation type="submission" date="2007-05" db="EMBL/GenBank/DDBJ databases">
        <title>Complete sequence of Pseudomonas putida F1.</title>
        <authorList>
            <consortium name="US DOE Joint Genome Institute"/>
            <person name="Copeland A."/>
            <person name="Lucas S."/>
            <person name="Lapidus A."/>
            <person name="Barry K."/>
            <person name="Detter J.C."/>
            <person name="Glavina del Rio T."/>
            <person name="Hammon N."/>
            <person name="Israni S."/>
            <person name="Dalin E."/>
            <person name="Tice H."/>
            <person name="Pitluck S."/>
            <person name="Chain P."/>
            <person name="Malfatti S."/>
            <person name="Shin M."/>
            <person name="Vergez L."/>
            <person name="Schmutz J."/>
            <person name="Larimer F."/>
            <person name="Land M."/>
            <person name="Hauser L."/>
            <person name="Kyrpides N."/>
            <person name="Lykidis A."/>
            <person name="Parales R."/>
            <person name="Richardson P."/>
        </authorList>
    </citation>
    <scope>NUCLEOTIDE SEQUENCE [LARGE SCALE GENOMIC DNA]</scope>
    <source>
        <strain>ATCC 700007 / DSM 6899 / JCM 31910 / BCRC 17059 / LMG 24140 / F1</strain>
    </source>
</reference>
<evidence type="ECO:0000255" key="1">
    <source>
        <dbReference type="HAMAP-Rule" id="MF_00750"/>
    </source>
</evidence>